<evidence type="ECO:0000255" key="1">
    <source>
        <dbReference type="HAMAP-Rule" id="MF_00141"/>
    </source>
</evidence>
<name>EFP_PSESM</name>
<protein>
    <recommendedName>
        <fullName evidence="1">Elongation factor P</fullName>
        <shortName evidence="1">EF-P</shortName>
    </recommendedName>
</protein>
<keyword id="KW-0963">Cytoplasm</keyword>
<keyword id="KW-0251">Elongation factor</keyword>
<keyword id="KW-0648">Protein biosynthesis</keyword>
<keyword id="KW-1185">Reference proteome</keyword>
<sequence>MKTGKELKPGTVIRLENDPWLVQKAEFTKSGRNSAIMKTKLKNLLTGYKTEIVYSADDKLDDVILDRKEATLSFISGDTYTFMDTTDYTMYELNAEDIESVLPFVEEGMTDVCEAVFFDERLVSVELPTTIVRQVDYTEGSARGDTSGKVMKPAKLKNGTELSVADFIEIGDMIEIDTREGGSYKGRAK</sequence>
<accession>Q885R6</accession>
<reference key="1">
    <citation type="journal article" date="2003" name="Proc. Natl. Acad. Sci. U.S.A.">
        <title>The complete genome sequence of the Arabidopsis and tomato pathogen Pseudomonas syringae pv. tomato DC3000.</title>
        <authorList>
            <person name="Buell C.R."/>
            <person name="Joardar V."/>
            <person name="Lindeberg M."/>
            <person name="Selengut J."/>
            <person name="Paulsen I.T."/>
            <person name="Gwinn M.L."/>
            <person name="Dodson R.J."/>
            <person name="DeBoy R.T."/>
            <person name="Durkin A.S."/>
            <person name="Kolonay J.F."/>
            <person name="Madupu R."/>
            <person name="Daugherty S.C."/>
            <person name="Brinkac L.M."/>
            <person name="Beanan M.J."/>
            <person name="Haft D.H."/>
            <person name="Nelson W.C."/>
            <person name="Davidsen T.M."/>
            <person name="Zafar N."/>
            <person name="Zhou L."/>
            <person name="Liu J."/>
            <person name="Yuan Q."/>
            <person name="Khouri H.M."/>
            <person name="Fedorova N.B."/>
            <person name="Tran B."/>
            <person name="Russell D."/>
            <person name="Berry K.J."/>
            <person name="Utterback T.R."/>
            <person name="Van Aken S.E."/>
            <person name="Feldblyum T.V."/>
            <person name="D'Ascenzo M."/>
            <person name="Deng W.-L."/>
            <person name="Ramos A.R."/>
            <person name="Alfano J.R."/>
            <person name="Cartinhour S."/>
            <person name="Chatterjee A.K."/>
            <person name="Delaney T.P."/>
            <person name="Lazarowitz S.G."/>
            <person name="Martin G.B."/>
            <person name="Schneider D.J."/>
            <person name="Tang X."/>
            <person name="Bender C.L."/>
            <person name="White O."/>
            <person name="Fraser C.M."/>
            <person name="Collmer A."/>
        </authorList>
    </citation>
    <scope>NUCLEOTIDE SEQUENCE [LARGE SCALE GENOMIC DNA]</scope>
    <source>
        <strain>ATCC BAA-871 / DC3000</strain>
    </source>
</reference>
<comment type="function">
    <text evidence="1">Involved in peptide bond synthesis. Stimulates efficient translation and peptide-bond synthesis on native or reconstituted 70S ribosomes in vitro. Probably functions indirectly by altering the affinity of the ribosome for aminoacyl-tRNA, thus increasing their reactivity as acceptors for peptidyl transferase.</text>
</comment>
<comment type="pathway">
    <text evidence="1">Protein biosynthesis; polypeptide chain elongation.</text>
</comment>
<comment type="subcellular location">
    <subcellularLocation>
        <location evidence="1">Cytoplasm</location>
    </subcellularLocation>
</comment>
<comment type="similarity">
    <text evidence="1">Belongs to the elongation factor P family.</text>
</comment>
<feature type="chain" id="PRO_0000094312" description="Elongation factor P">
    <location>
        <begin position="1"/>
        <end position="189"/>
    </location>
</feature>
<dbReference type="EMBL" id="AE016853">
    <property type="protein sequence ID" value="AAO55285.1"/>
    <property type="molecule type" value="Genomic_DNA"/>
</dbReference>
<dbReference type="RefSeq" id="NP_791590.1">
    <property type="nucleotide sequence ID" value="NC_004578.1"/>
</dbReference>
<dbReference type="RefSeq" id="WP_003373297.1">
    <property type="nucleotide sequence ID" value="NC_004578.1"/>
</dbReference>
<dbReference type="SMR" id="Q885R6"/>
<dbReference type="STRING" id="223283.PSPTO_1765"/>
<dbReference type="KEGG" id="pst:PSPTO_1765"/>
<dbReference type="PATRIC" id="fig|223283.9.peg.1794"/>
<dbReference type="eggNOG" id="COG0231">
    <property type="taxonomic scope" value="Bacteria"/>
</dbReference>
<dbReference type="HOGENOM" id="CLU_074944_2_1_6"/>
<dbReference type="OrthoDB" id="9801844at2"/>
<dbReference type="PhylomeDB" id="Q885R6"/>
<dbReference type="UniPathway" id="UPA00345"/>
<dbReference type="Proteomes" id="UP000002515">
    <property type="component" value="Chromosome"/>
</dbReference>
<dbReference type="GO" id="GO:0005737">
    <property type="term" value="C:cytoplasm"/>
    <property type="evidence" value="ECO:0007669"/>
    <property type="project" value="UniProtKB-SubCell"/>
</dbReference>
<dbReference type="GO" id="GO:0003746">
    <property type="term" value="F:translation elongation factor activity"/>
    <property type="evidence" value="ECO:0007669"/>
    <property type="project" value="UniProtKB-UniRule"/>
</dbReference>
<dbReference type="GO" id="GO:0043043">
    <property type="term" value="P:peptide biosynthetic process"/>
    <property type="evidence" value="ECO:0007669"/>
    <property type="project" value="InterPro"/>
</dbReference>
<dbReference type="CDD" id="cd04470">
    <property type="entry name" value="S1_EF-P_repeat_1"/>
    <property type="match status" value="1"/>
</dbReference>
<dbReference type="FunFam" id="2.30.30.30:FF:000003">
    <property type="entry name" value="Elongation factor P"/>
    <property type="match status" value="1"/>
</dbReference>
<dbReference type="FunFam" id="2.40.50.140:FF:000004">
    <property type="entry name" value="Elongation factor P"/>
    <property type="match status" value="1"/>
</dbReference>
<dbReference type="Gene3D" id="2.30.30.30">
    <property type="match status" value="1"/>
</dbReference>
<dbReference type="Gene3D" id="2.40.50.140">
    <property type="entry name" value="Nucleic acid-binding proteins"/>
    <property type="match status" value="2"/>
</dbReference>
<dbReference type="HAMAP" id="MF_00141">
    <property type="entry name" value="EF_P"/>
    <property type="match status" value="1"/>
</dbReference>
<dbReference type="InterPro" id="IPR015365">
    <property type="entry name" value="Elong-fact-P_C"/>
</dbReference>
<dbReference type="InterPro" id="IPR012340">
    <property type="entry name" value="NA-bd_OB-fold"/>
</dbReference>
<dbReference type="InterPro" id="IPR014722">
    <property type="entry name" value="Rib_uL2_dom2"/>
</dbReference>
<dbReference type="InterPro" id="IPR020599">
    <property type="entry name" value="Transl_elong_fac_P/YeiP"/>
</dbReference>
<dbReference type="InterPro" id="IPR013185">
    <property type="entry name" value="Transl_elong_KOW-like"/>
</dbReference>
<dbReference type="InterPro" id="IPR001059">
    <property type="entry name" value="Transl_elong_P/YeiP_cen"/>
</dbReference>
<dbReference type="InterPro" id="IPR011768">
    <property type="entry name" value="Transl_elongation_fac_P"/>
</dbReference>
<dbReference type="InterPro" id="IPR008991">
    <property type="entry name" value="Translation_prot_SH3-like_sf"/>
</dbReference>
<dbReference type="NCBIfam" id="NF001810">
    <property type="entry name" value="PRK00529.1"/>
    <property type="match status" value="1"/>
</dbReference>
<dbReference type="PANTHER" id="PTHR30053">
    <property type="entry name" value="ELONGATION FACTOR P"/>
    <property type="match status" value="1"/>
</dbReference>
<dbReference type="PANTHER" id="PTHR30053:SF12">
    <property type="entry name" value="ELONGATION FACTOR P (EF-P) FAMILY PROTEIN"/>
    <property type="match status" value="1"/>
</dbReference>
<dbReference type="Pfam" id="PF01132">
    <property type="entry name" value="EFP"/>
    <property type="match status" value="1"/>
</dbReference>
<dbReference type="Pfam" id="PF08207">
    <property type="entry name" value="EFP_N"/>
    <property type="match status" value="1"/>
</dbReference>
<dbReference type="Pfam" id="PF09285">
    <property type="entry name" value="Elong-fact-P_C"/>
    <property type="match status" value="1"/>
</dbReference>
<dbReference type="PIRSF" id="PIRSF005901">
    <property type="entry name" value="EF-P"/>
    <property type="match status" value="1"/>
</dbReference>
<dbReference type="SMART" id="SM01185">
    <property type="entry name" value="EFP"/>
    <property type="match status" value="1"/>
</dbReference>
<dbReference type="SMART" id="SM00841">
    <property type="entry name" value="Elong-fact-P_C"/>
    <property type="match status" value="1"/>
</dbReference>
<dbReference type="SUPFAM" id="SSF50249">
    <property type="entry name" value="Nucleic acid-binding proteins"/>
    <property type="match status" value="2"/>
</dbReference>
<dbReference type="SUPFAM" id="SSF50104">
    <property type="entry name" value="Translation proteins SH3-like domain"/>
    <property type="match status" value="1"/>
</dbReference>
<gene>
    <name evidence="1" type="primary">efp</name>
    <name type="ordered locus">PSPTO_1765</name>
</gene>
<proteinExistence type="inferred from homology"/>
<organism>
    <name type="scientific">Pseudomonas syringae pv. tomato (strain ATCC BAA-871 / DC3000)</name>
    <dbReference type="NCBI Taxonomy" id="223283"/>
    <lineage>
        <taxon>Bacteria</taxon>
        <taxon>Pseudomonadati</taxon>
        <taxon>Pseudomonadota</taxon>
        <taxon>Gammaproteobacteria</taxon>
        <taxon>Pseudomonadales</taxon>
        <taxon>Pseudomonadaceae</taxon>
        <taxon>Pseudomonas</taxon>
    </lineage>
</organism>